<dbReference type="EC" id="1.6.1.1" evidence="1"/>
<dbReference type="EMBL" id="CU928163">
    <property type="protein sequence ID" value="CAR15619.1"/>
    <property type="molecule type" value="Genomic_DNA"/>
</dbReference>
<dbReference type="RefSeq" id="WP_001120810.1">
    <property type="nucleotide sequence ID" value="NC_011751.1"/>
</dbReference>
<dbReference type="RefSeq" id="YP_002415108.1">
    <property type="nucleotide sequence ID" value="NC_011751.1"/>
</dbReference>
<dbReference type="SMR" id="B7NFR2"/>
<dbReference type="STRING" id="585056.ECUMN_4493"/>
<dbReference type="GeneID" id="75203206"/>
<dbReference type="KEGG" id="eum:ECUMN_4493"/>
<dbReference type="PATRIC" id="fig|585056.7.peg.4663"/>
<dbReference type="HOGENOM" id="CLU_016755_0_0_6"/>
<dbReference type="Proteomes" id="UP000007097">
    <property type="component" value="Chromosome"/>
</dbReference>
<dbReference type="GO" id="GO:0005829">
    <property type="term" value="C:cytosol"/>
    <property type="evidence" value="ECO:0007669"/>
    <property type="project" value="TreeGrafter"/>
</dbReference>
<dbReference type="GO" id="GO:0004148">
    <property type="term" value="F:dihydrolipoyl dehydrogenase (NADH) activity"/>
    <property type="evidence" value="ECO:0007669"/>
    <property type="project" value="TreeGrafter"/>
</dbReference>
<dbReference type="GO" id="GO:0050660">
    <property type="term" value="F:flavin adenine dinucleotide binding"/>
    <property type="evidence" value="ECO:0007669"/>
    <property type="project" value="TreeGrafter"/>
</dbReference>
<dbReference type="GO" id="GO:0003957">
    <property type="term" value="F:NAD(P)+ transhydrogenase (Si-specific) activity"/>
    <property type="evidence" value="ECO:0007669"/>
    <property type="project" value="UniProtKB-UniRule"/>
</dbReference>
<dbReference type="GO" id="GO:0006103">
    <property type="term" value="P:2-oxoglutarate metabolic process"/>
    <property type="evidence" value="ECO:0007669"/>
    <property type="project" value="TreeGrafter"/>
</dbReference>
<dbReference type="GO" id="GO:0006739">
    <property type="term" value="P:NADP metabolic process"/>
    <property type="evidence" value="ECO:0007669"/>
    <property type="project" value="UniProtKB-UniRule"/>
</dbReference>
<dbReference type="FunFam" id="3.30.390.30:FF:000002">
    <property type="entry name" value="Soluble pyridine nucleotide transhydrogenase"/>
    <property type="match status" value="1"/>
</dbReference>
<dbReference type="FunFam" id="3.50.50.60:FF:000008">
    <property type="entry name" value="Soluble pyridine nucleotide transhydrogenase"/>
    <property type="match status" value="1"/>
</dbReference>
<dbReference type="Gene3D" id="3.30.390.30">
    <property type="match status" value="1"/>
</dbReference>
<dbReference type="Gene3D" id="3.50.50.60">
    <property type="entry name" value="FAD/NAD(P)-binding domain"/>
    <property type="match status" value="2"/>
</dbReference>
<dbReference type="HAMAP" id="MF_00247">
    <property type="entry name" value="SthA"/>
    <property type="match status" value="1"/>
</dbReference>
<dbReference type="InterPro" id="IPR050151">
    <property type="entry name" value="Class-I_Pyr_Nuc-Dis_Oxidored"/>
</dbReference>
<dbReference type="InterPro" id="IPR036188">
    <property type="entry name" value="FAD/NAD-bd_sf"/>
</dbReference>
<dbReference type="InterPro" id="IPR023753">
    <property type="entry name" value="FAD/NAD-binding_dom"/>
</dbReference>
<dbReference type="InterPro" id="IPR016156">
    <property type="entry name" value="FAD/NAD-linked_Rdtase_dimer_sf"/>
</dbReference>
<dbReference type="InterPro" id="IPR001100">
    <property type="entry name" value="Pyr_nuc-diS_OxRdtase"/>
</dbReference>
<dbReference type="InterPro" id="IPR004099">
    <property type="entry name" value="Pyr_nucl-diS_OxRdtase_dimer"/>
</dbReference>
<dbReference type="InterPro" id="IPR022962">
    <property type="entry name" value="STH_gammaproteobact"/>
</dbReference>
<dbReference type="NCBIfam" id="NF003585">
    <property type="entry name" value="PRK05249.1"/>
    <property type="match status" value="1"/>
</dbReference>
<dbReference type="PANTHER" id="PTHR22912">
    <property type="entry name" value="DISULFIDE OXIDOREDUCTASE"/>
    <property type="match status" value="1"/>
</dbReference>
<dbReference type="PANTHER" id="PTHR22912:SF93">
    <property type="entry name" value="SOLUBLE PYRIDINE NUCLEOTIDE TRANSHYDROGENASE"/>
    <property type="match status" value="1"/>
</dbReference>
<dbReference type="Pfam" id="PF07992">
    <property type="entry name" value="Pyr_redox_2"/>
    <property type="match status" value="1"/>
</dbReference>
<dbReference type="Pfam" id="PF02852">
    <property type="entry name" value="Pyr_redox_dim"/>
    <property type="match status" value="1"/>
</dbReference>
<dbReference type="PIRSF" id="PIRSF000350">
    <property type="entry name" value="Mercury_reductase_MerA"/>
    <property type="match status" value="1"/>
</dbReference>
<dbReference type="PRINTS" id="PR00368">
    <property type="entry name" value="FADPNR"/>
</dbReference>
<dbReference type="PRINTS" id="PR00411">
    <property type="entry name" value="PNDRDTASEI"/>
</dbReference>
<dbReference type="SUPFAM" id="SSF51905">
    <property type="entry name" value="FAD/NAD(P)-binding domain"/>
    <property type="match status" value="1"/>
</dbReference>
<dbReference type="SUPFAM" id="SSF55424">
    <property type="entry name" value="FAD/NAD-linked reductases, dimerisation (C-terminal) domain"/>
    <property type="match status" value="1"/>
</dbReference>
<proteinExistence type="inferred from homology"/>
<protein>
    <recommendedName>
        <fullName evidence="1">Soluble pyridine nucleotide transhydrogenase</fullName>
        <shortName evidence="1">STH</shortName>
        <ecNumber evidence="1">1.6.1.1</ecNumber>
    </recommendedName>
    <alternativeName>
        <fullName evidence="1">NAD(P)(+) transhydrogenase [B-specific]</fullName>
    </alternativeName>
</protein>
<comment type="function">
    <text evidence="1">Conversion of NADPH, generated by peripheral catabolic pathways, to NADH, which can enter the respiratory chain for energy generation.</text>
</comment>
<comment type="catalytic activity">
    <reaction evidence="1">
        <text>NAD(+) + NADPH = NADH + NADP(+)</text>
        <dbReference type="Rhea" id="RHEA:11692"/>
        <dbReference type="ChEBI" id="CHEBI:57540"/>
        <dbReference type="ChEBI" id="CHEBI:57783"/>
        <dbReference type="ChEBI" id="CHEBI:57945"/>
        <dbReference type="ChEBI" id="CHEBI:58349"/>
        <dbReference type="EC" id="1.6.1.1"/>
    </reaction>
</comment>
<comment type="cofactor">
    <cofactor evidence="1">
        <name>FAD</name>
        <dbReference type="ChEBI" id="CHEBI:57692"/>
    </cofactor>
    <text evidence="1">Binds 1 FAD per subunit.</text>
</comment>
<comment type="subcellular location">
    <subcellularLocation>
        <location evidence="1">Cytoplasm</location>
    </subcellularLocation>
</comment>
<comment type="similarity">
    <text evidence="1">Belongs to the class-I pyridine nucleotide-disulfide oxidoreductase family.</text>
</comment>
<name>STHA_ECOLU</name>
<accession>B7NFR2</accession>
<gene>
    <name evidence="1" type="primary">sthA</name>
    <name evidence="1" type="synonym">udhA</name>
    <name type="ordered locus">ECUMN_4493</name>
</gene>
<sequence length="466" mass="51560">MPHSYDYDAIVIGSGPGGEGAAMGLVKQGARVAVIERYQNVGGGCTHWGTIPSKALRHAVSRIIEFNQNPLYSDHSRLLRSSFADILNHADNVINQQTRMRQGFYERNHCEILQGNARFVDEHTLALDCPDGSVETLTAEKFVIACGSRPYHPTDVDFTHPRIYDSDSILSMHHEPRHVLIYGAGVIGCEYASIFRGMDVKVDLINTRDRLLAFLDQEMSDSLSYHFWNSGVVIRHNEEYEKIEGCDDGVIMHLKSGKKLKADCLLYANGRTGNTDSLALQNIGLETDSRGQLKVNSMYQTAQPHVYAVGDVIGYPSLASAAYDQGRIAAQALVKGEATAHLIEDIPTGIYTIPEISSVGKTEQQLTAMKVPYEVGRAQFKHLARAQIVGMNVGTLKILFHRETKEILGIHCFGERAAEIIHIGQAIMEQKGGGNTIEYFVNTTFNYPTMAEAYRVAALNGLNRLF</sequence>
<evidence type="ECO:0000255" key="1">
    <source>
        <dbReference type="HAMAP-Rule" id="MF_00247"/>
    </source>
</evidence>
<reference key="1">
    <citation type="journal article" date="2009" name="PLoS Genet.">
        <title>Organised genome dynamics in the Escherichia coli species results in highly diverse adaptive paths.</title>
        <authorList>
            <person name="Touchon M."/>
            <person name="Hoede C."/>
            <person name="Tenaillon O."/>
            <person name="Barbe V."/>
            <person name="Baeriswyl S."/>
            <person name="Bidet P."/>
            <person name="Bingen E."/>
            <person name="Bonacorsi S."/>
            <person name="Bouchier C."/>
            <person name="Bouvet O."/>
            <person name="Calteau A."/>
            <person name="Chiapello H."/>
            <person name="Clermont O."/>
            <person name="Cruveiller S."/>
            <person name="Danchin A."/>
            <person name="Diard M."/>
            <person name="Dossat C."/>
            <person name="Karoui M.E."/>
            <person name="Frapy E."/>
            <person name="Garry L."/>
            <person name="Ghigo J.M."/>
            <person name="Gilles A.M."/>
            <person name="Johnson J."/>
            <person name="Le Bouguenec C."/>
            <person name="Lescat M."/>
            <person name="Mangenot S."/>
            <person name="Martinez-Jehanne V."/>
            <person name="Matic I."/>
            <person name="Nassif X."/>
            <person name="Oztas S."/>
            <person name="Petit M.A."/>
            <person name="Pichon C."/>
            <person name="Rouy Z."/>
            <person name="Ruf C.S."/>
            <person name="Schneider D."/>
            <person name="Tourret J."/>
            <person name="Vacherie B."/>
            <person name="Vallenet D."/>
            <person name="Medigue C."/>
            <person name="Rocha E.P.C."/>
            <person name="Denamur E."/>
        </authorList>
    </citation>
    <scope>NUCLEOTIDE SEQUENCE [LARGE SCALE GENOMIC DNA]</scope>
    <source>
        <strain>UMN026 / ExPEC</strain>
    </source>
</reference>
<keyword id="KW-0963">Cytoplasm</keyword>
<keyword id="KW-0274">FAD</keyword>
<keyword id="KW-0285">Flavoprotein</keyword>
<keyword id="KW-0520">NAD</keyword>
<keyword id="KW-0521">NADP</keyword>
<keyword id="KW-0560">Oxidoreductase</keyword>
<organism>
    <name type="scientific">Escherichia coli O17:K52:H18 (strain UMN026 / ExPEC)</name>
    <dbReference type="NCBI Taxonomy" id="585056"/>
    <lineage>
        <taxon>Bacteria</taxon>
        <taxon>Pseudomonadati</taxon>
        <taxon>Pseudomonadota</taxon>
        <taxon>Gammaproteobacteria</taxon>
        <taxon>Enterobacterales</taxon>
        <taxon>Enterobacteriaceae</taxon>
        <taxon>Escherichia</taxon>
    </lineage>
</organism>
<feature type="chain" id="PRO_1000193451" description="Soluble pyridine nucleotide transhydrogenase">
    <location>
        <begin position="1"/>
        <end position="466"/>
    </location>
</feature>
<feature type="binding site" evidence="1">
    <location>
        <begin position="36"/>
        <end position="45"/>
    </location>
    <ligand>
        <name>FAD</name>
        <dbReference type="ChEBI" id="CHEBI:57692"/>
    </ligand>
</feature>